<accession>P27959</accession>
<dbReference type="EMBL" id="D10074">
    <property type="protein sequence ID" value="BAA00968.1"/>
    <property type="molecule type" value="Genomic_RNA"/>
</dbReference>
<dbReference type="SMR" id="P27959"/>
<dbReference type="euHCVdb" id="D10074"/>
<dbReference type="GO" id="GO:0044167">
    <property type="term" value="C:host cell endoplasmic reticulum membrane"/>
    <property type="evidence" value="ECO:0007669"/>
    <property type="project" value="UniProtKB-SubCell"/>
</dbReference>
<dbReference type="GO" id="GO:0044186">
    <property type="term" value="C:host cell lipid droplet"/>
    <property type="evidence" value="ECO:0007669"/>
    <property type="project" value="UniProtKB-SubCell"/>
</dbReference>
<dbReference type="GO" id="GO:0044191">
    <property type="term" value="C:host cell mitochondrial membrane"/>
    <property type="evidence" value="ECO:0007669"/>
    <property type="project" value="UniProtKB-SubCell"/>
</dbReference>
<dbReference type="GO" id="GO:0042025">
    <property type="term" value="C:host cell nucleus"/>
    <property type="evidence" value="ECO:0007669"/>
    <property type="project" value="UniProtKB-SubCell"/>
</dbReference>
<dbReference type="GO" id="GO:0016020">
    <property type="term" value="C:membrane"/>
    <property type="evidence" value="ECO:0007669"/>
    <property type="project" value="UniProtKB-KW"/>
</dbReference>
<dbReference type="GO" id="GO:1990904">
    <property type="term" value="C:ribonucleoprotein complex"/>
    <property type="evidence" value="ECO:0007669"/>
    <property type="project" value="UniProtKB-KW"/>
</dbReference>
<dbReference type="GO" id="GO:0019031">
    <property type="term" value="C:viral envelope"/>
    <property type="evidence" value="ECO:0007669"/>
    <property type="project" value="UniProtKB-KW"/>
</dbReference>
<dbReference type="GO" id="GO:0019013">
    <property type="term" value="C:viral nucleocapsid"/>
    <property type="evidence" value="ECO:0007669"/>
    <property type="project" value="UniProtKB-KW"/>
</dbReference>
<dbReference type="GO" id="GO:0055036">
    <property type="term" value="C:virion membrane"/>
    <property type="evidence" value="ECO:0007669"/>
    <property type="project" value="UniProtKB-SubCell"/>
</dbReference>
<dbReference type="GO" id="GO:0003723">
    <property type="term" value="F:RNA binding"/>
    <property type="evidence" value="ECO:0007669"/>
    <property type="project" value="UniProtKB-KW"/>
</dbReference>
<dbReference type="GO" id="GO:0005198">
    <property type="term" value="F:structural molecule activity"/>
    <property type="evidence" value="ECO:0007669"/>
    <property type="project" value="InterPro"/>
</dbReference>
<dbReference type="GO" id="GO:0075512">
    <property type="term" value="P:clathrin-dependent endocytosis of virus by host cell"/>
    <property type="evidence" value="ECO:0007669"/>
    <property type="project" value="UniProtKB-KW"/>
</dbReference>
<dbReference type="GO" id="GO:0039654">
    <property type="term" value="P:fusion of virus membrane with host endosome membrane"/>
    <property type="evidence" value="ECO:0007669"/>
    <property type="project" value="UniProtKB-KW"/>
</dbReference>
<dbReference type="GO" id="GO:0052170">
    <property type="term" value="P:symbiont-mediated suppression of host innate immune response"/>
    <property type="evidence" value="ECO:0007669"/>
    <property type="project" value="UniProtKB-KW"/>
</dbReference>
<dbReference type="GO" id="GO:0019062">
    <property type="term" value="P:virion attachment to host cell"/>
    <property type="evidence" value="ECO:0007669"/>
    <property type="project" value="UniProtKB-KW"/>
</dbReference>
<dbReference type="FunFam" id="3.30.160.890:FF:000001">
    <property type="entry name" value="Genome polyprotein"/>
    <property type="match status" value="1"/>
</dbReference>
<dbReference type="FunFam" id="4.10.710.10:FF:000001">
    <property type="entry name" value="Genome polyprotein"/>
    <property type="match status" value="1"/>
</dbReference>
<dbReference type="Gene3D" id="4.10.710.10">
    <property type="entry name" value="Hepatitis C Virus Capsid Protein, Chain A"/>
    <property type="match status" value="1"/>
</dbReference>
<dbReference type="Gene3D" id="3.30.160.890">
    <property type="entry name" value="Hepatitis C virus envelope glycoprotein E1, chain C"/>
    <property type="match status" value="1"/>
</dbReference>
<dbReference type="InterPro" id="IPR002521">
    <property type="entry name" value="HCV_Core_C"/>
</dbReference>
<dbReference type="InterPro" id="IPR044896">
    <property type="entry name" value="HCV_core_chain_A"/>
</dbReference>
<dbReference type="InterPro" id="IPR002522">
    <property type="entry name" value="HCV_core_N"/>
</dbReference>
<dbReference type="InterPro" id="IPR002519">
    <property type="entry name" value="HCV_Env"/>
</dbReference>
<dbReference type="InterPro" id="IPR002531">
    <property type="entry name" value="HCV_NS1"/>
</dbReference>
<dbReference type="Pfam" id="PF01543">
    <property type="entry name" value="HCV_capsid"/>
    <property type="match status" value="1"/>
</dbReference>
<dbReference type="Pfam" id="PF01542">
    <property type="entry name" value="HCV_core"/>
    <property type="match status" value="1"/>
</dbReference>
<dbReference type="Pfam" id="PF01539">
    <property type="entry name" value="HCV_env"/>
    <property type="match status" value="1"/>
</dbReference>
<dbReference type="Pfam" id="PF01560">
    <property type="entry name" value="HCV_NS1"/>
    <property type="match status" value="1"/>
</dbReference>
<evidence type="ECO:0000250" key="1">
    <source>
        <dbReference type="UniProtKB" id="P26662"/>
    </source>
</evidence>
<evidence type="ECO:0000250" key="2">
    <source>
        <dbReference type="UniProtKB" id="P26663"/>
    </source>
</evidence>
<evidence type="ECO:0000250" key="3">
    <source>
        <dbReference type="UniProtKB" id="P26664"/>
    </source>
</evidence>
<evidence type="ECO:0000250" key="4">
    <source>
        <dbReference type="UniProtKB" id="P27958"/>
    </source>
</evidence>
<evidence type="ECO:0000250" key="5">
    <source>
        <dbReference type="UniProtKB" id="P29846"/>
    </source>
</evidence>
<evidence type="ECO:0000250" key="6">
    <source>
        <dbReference type="UniProtKB" id="Q01403"/>
    </source>
</evidence>
<evidence type="ECO:0000250" key="7">
    <source>
        <dbReference type="UniProtKB" id="Q03463"/>
    </source>
</evidence>
<evidence type="ECO:0000250" key="8">
    <source>
        <dbReference type="UniProtKB" id="Q5EG65"/>
    </source>
</evidence>
<evidence type="ECO:0000250" key="9">
    <source>
        <dbReference type="UniProtKB" id="Q913V3"/>
    </source>
</evidence>
<evidence type="ECO:0000250" key="10">
    <source>
        <dbReference type="UniProtKB" id="Q99IB8"/>
    </source>
</evidence>
<evidence type="ECO:0000250" key="11">
    <source>
        <dbReference type="UniProtKB" id="Q9WMX2"/>
    </source>
</evidence>
<evidence type="ECO:0000255" key="12"/>
<evidence type="ECO:0000256" key="13">
    <source>
        <dbReference type="SAM" id="MobiDB-lite"/>
    </source>
</evidence>
<evidence type="ECO:0000305" key="14"/>
<name>POLG_HCVJ2</name>
<keyword id="KW-0007">Acetylation</keyword>
<keyword id="KW-0053">Apoptosis</keyword>
<keyword id="KW-0167">Capsid protein</keyword>
<keyword id="KW-1165">Clathrin-mediated endocytosis of virus by host</keyword>
<keyword id="KW-1170">Fusion of virus membrane with host endosomal membrane</keyword>
<keyword id="KW-1168">Fusion of virus membrane with host membrane</keyword>
<keyword id="KW-0325">Glycoprotein</keyword>
<keyword id="KW-1035">Host cytoplasm</keyword>
<keyword id="KW-1038">Host endoplasmic reticulum</keyword>
<keyword id="KW-1041">Host lipid droplet</keyword>
<keyword id="KW-1043">Host membrane</keyword>
<keyword id="KW-1045">Host mitochondrion</keyword>
<keyword id="KW-1048">Host nucleus</keyword>
<keyword id="KW-0945">Host-virus interaction</keyword>
<keyword id="KW-1090">Inhibition of host innate immune response by virus</keyword>
<keyword id="KW-0922">Interferon antiviral system evasion</keyword>
<keyword id="KW-0472">Membrane</keyword>
<keyword id="KW-0553">Oncogene</keyword>
<keyword id="KW-0597">Phosphoprotein</keyword>
<keyword id="KW-0687">Ribonucleoprotein</keyword>
<keyword id="KW-0694">RNA-binding</keyword>
<keyword id="KW-0812">Transmembrane</keyword>
<keyword id="KW-1133">Transmembrane helix</keyword>
<keyword id="KW-0832">Ubl conjugation</keyword>
<keyword id="KW-1161">Viral attachment to host cell</keyword>
<keyword id="KW-0261">Viral envelope protein</keyword>
<keyword id="KW-0899">Viral immunoevasion</keyword>
<keyword id="KW-0543">Viral nucleoprotein</keyword>
<keyword id="KW-1162">Viral penetration into host cytoplasm</keyword>
<keyword id="KW-0946">Virion</keyword>
<keyword id="KW-1164">Virus endocytosis by host</keyword>
<keyword id="KW-1160">Virus entry into host cell</keyword>
<comment type="function">
    <molecule>Mature core protein</molecule>
    <text evidence="1 3 4 5 10 14">Packages viral RNA to form a viral nucleocapsid, and promotes virion budding (Probable). Participates in the viral particle production as a result of its interaction with the non-structural protein 5A (By similarity). Binds RNA and may function as a RNA chaperone to induce the RNA structural rearrangements taking place during virus replication (By similarity). Modulates viral translation initiation by interacting with viral IRES and 40S ribosomal subunit (By similarity). Affects various cell signaling pathways, host immunity and lipid metabolism (Probable). Prevents the establishment of cellular antiviral state by blocking the interferon-alpha/beta (IFN-alpha/beta) and IFN-gamma signaling pathways and by blocking the formation of phosphorylated STAT1 and promoting ubiquitin-mediated proteasome-dependent degradation of STAT1 (By similarity). Activates STAT3 leading to cellular transformation (By similarity). Regulates the activity of cellular genes, including c-myc and c-fos (By similarity). May repress the promoter of p53, and sequester CREB3 and SP110 isoform 3/Sp110b in the cytoplasm (By similarity). Represses cell cycle negative regulating factor CDKN1A, thereby interrupting an important check point of normal cell cycle regulation (By similarity). Targets transcription factors involved in the regulation of inflammatory responses and in the immune response: suppresses TNF-induced NF-kappa-B activation, and activates AP-1 (By similarity). Binds to dendritic cells (DCs) via C1QR1, resulting in down-regulation of T-lymphocytes proliferation (By similarity). Alters lipid metabolism by interacting with hepatocellular proteins involved in lipid accumulation and storage (By similarity). Induces up-regulation of FAS promoter activity, and thereby contributes to the increased triglyceride accumulation in hepatocytes (steatosis) (By similarity).</text>
</comment>
<comment type="function">
    <molecule>Envelope glycoprotein E1</molecule>
    <text evidence="4">Forms a heterodimer with envelope glycoprotein E2, which mediates virus attachment to the host cell, virion internalization through clathrin-dependent endocytosis and fusion with host membrane (By similarity). Fusion with the host cell is most likely mediated by both E1 and E2, through conformational rearrangements of the heterodimer required for fusion rather than a classical class II fusion mechanism (By similarity). E1/E2 heterodimer binds host apolipoproteins such as APOB and ApoE thereby forming a lipo-viro-particle (LVP) (By similarity). APOE associated to the LVP allows the initial virus attachment to cell surface receptors such as the heparan sulfate proteoglycans (HSPGs), syndecan-1 (SDC1), syndecan-1 (SDC2), the low-density lipoprotein receptor (LDLR) and scavenger receptor class B type I (SCARB1) (By similarity). The cholesterol transfer activity of SCARB1 allows E2 exposure and binding of E2 to SCARB1 and the tetraspanin CD81 (By similarity). E1/E2 heterodimer binding on CD81 activates the epithelial growth factor receptor (EGFR) signaling pathway (By similarity). Diffusion of the complex E1-E2-EGFR-SCARB1-CD81 to the cell lateral membrane allows further interaction with Claudin 1 (CLDN1) and occludin (OCLN) to finally trigger HCV entry (By similarity).</text>
</comment>
<comment type="function">
    <molecule>Envelope glycoprotein E2</molecule>
    <text evidence="3 4">Forms a heterodimer with envelope glycoprotein E1, which mediates virus attachment to the host cell, virion internalization through clathrin-dependent endocytosis and fusion with host membrane (By similarity). Fusion with the host cell is most likely mediated by both E1 and E2, through conformational rearrangements of the heterodimer required for fusion rather than a classical class II fusion mechanism (By similarity). The interaction between envelope glycoprotein E2 and host apolipoprotein E/APOE allows the proper assembly, maturation and infectivity of the viral particles (By similarity). This interaction is probably promoted via the up-regulation of cellular autophagy by the virus (By similarity). E1/E2 heterodimer binds host apolipoproteins such as APOB and APOE thereby forming a lipo-viro-particle (LVP) (By similarity). APOE associated to the LVP allows the initial virus attachment to cell surface receptors such as the heparan sulfate proteoglycans (HSPGs), syndecan-1 (SDC1), syndecan-1 (SDC2), the low-density lipoprotein receptor (LDLR) and scavenger receptor class B type I (SCARB1) (By similarity). The cholesterol transfer activity of SCARB1 allows E2 exposure and binding of E2 to SCARB1 and the tetraspanin CD81 (By similarity). E1/E2 heterodimer binding on CD81 activates the epithelial growth factor receptor (EGFR) signaling pathway (By similarity). Diffusion of the complex E1-E2-EGFR-SCARB1-CD81 to the cell lateral membrane allows further interaction with Claudin 1 (CLDN1) and occludin (OCLN) to finally trigger HCV entry (By similarity). Inhibits host EIF2AK2/PKR activation, preventing the establishment of an antiviral state (By similarity). Viral ligand for CD209/DC-SIGN and CLEC4M/DC-SIGNR, which are respectively found on dendritic cells (DCs), and on liver sinusoidal endothelial cells and macrophage-like cells of lymph node sinuses (By similarity). These interactions allow the capture of circulating HCV particles by these cells and subsequent facilitated transmission to permissive cells such as hepatocytes and lymphocyte subpopulations (By similarity).</text>
</comment>
<comment type="subunit">
    <molecule>Mature core protein</molecule>
    <text evidence="1 3 4 5 7 8 10">Homooligomer (By similarity). Interacts with E1 (via C-terminus) (By similarity). Interacts with the non-structural protein 5A (By similarity). Interacts (via N-terminus) with host STAT1 (via SH2 domain); this interaction results in decreased STAT1 phosphorylation and ubiquitin-mediated proteasome-dependent STAT1 degradation, leading to decreased IFN-stimulated gene transcription (By similarity). Interacts with host STAT3; this interaction constitutively activates STAT3 (By similarity). Interacts with host LTBR receptor (By similarity). Interacts with host TNFRSF1A receptor and possibly induces apoptosis (By similarity). Interacts with host HNRPK (By similarity). Interacts with host YWHAE (By similarity). Interacts with host UBE3A/E6AP (By similarity). Interacts with host DDX3X (By similarity). Interacts with host APOA2 (By similarity). Interacts with host RXRA protein (By similarity). Interacts with host SP110 isoform 3/Sp110b; this interaction sequesters the transcriptional corepressor SP110 away from the nucleus (By similarity). Interacts with host CREB3 nuclear transcription protein; this interaction triggers cell transformation (By similarity). Interacts with host ACY3 (By similarity). Interacts with host C1QR1 (By similarity). Interacts with host RBM24; this interaction, which enhances the interaction of the mature core protein with 5'-UTR, may inhibit viral translation and favor replication (By similarity). Interacts with host EIF2AK2/PKR; this interaction induces the autophosphorylation of EIF2AK2 (By similarity). Part of the viral assembly initiation complex composed of NS2, E1, E2, NS3, NS4A, NS5A and the mature core protein (By similarity).</text>
</comment>
<comment type="subunit">
    <molecule>Envelope glycoprotein E1</molecule>
    <text evidence="4 10">Forms a heterodimer with envelope glycoprotein E2 (By similarity). Interacts with mature core protein (By similarity). Interacts with protease NS2 (By similarity). The heterodimer E1/E2 interacts with host CLDN1; this interaction plays a role in viral entry into host cell (By similarity). Interacts with host SPSB2 (via C-terminus) (By similarity). Part of the viral assembly initiation complex composed of NS2, E1, E2, NS3, NS4A, NS5A and the mature core protein (By similarity).</text>
</comment>
<comment type="subunit">
    <molecule>Envelope glycoprotein E2</molecule>
    <text evidence="4 10">Forms a heterodimer with envelope glycoprotein E1 (By similarity). Interacts with host CD81 and SCARB1 receptors; these interactions play a role in viral entry into host cell (By similarity). Interacts with host EIF2AK2/PKR; this interaction inhibits EIF2AK2 and probably allows the virus to evade the innate immune response (By similarity). Interacts with host CD209/DC-SIGN and CLEC4M/DC-SIGNR (By similarity). Interact with host SPCS1; this interaction is essential for viral particle assembly (By similarity). Interacts with protease NS2 (By similarity). The heterodimer E1/E2 interacts with host CLDN1; this interaction plays a role in viral entry into host cell (By similarity). Part of the viral assembly initiation complex composed of NS2, E1, E2, NS3, NS4A, NS5A and the mature core protein (By similarity).</text>
</comment>
<comment type="subcellular location">
    <molecule>Core protein precursor</molecule>
    <subcellularLocation>
        <location evidence="3">Host endoplasmic reticulum membrane</location>
        <topology evidence="12">Single-pass membrane protein</topology>
    </subcellularLocation>
    <subcellularLocation>
        <location evidence="3">Host mitochondrion membrane</location>
        <topology evidence="12">Single-pass type I membrane protein</topology>
    </subcellularLocation>
    <text>The C-terminal transmembrane domain of the core protein precursor contains an ER signal leading the nascent polyprotein to the ER membrane.</text>
</comment>
<comment type="subcellular location">
    <molecule>Mature core protein</molecule>
    <subcellularLocation>
        <location evidence="10">Virion</location>
    </subcellularLocation>
    <subcellularLocation>
        <location evidence="10">Host cytoplasm</location>
    </subcellularLocation>
    <subcellularLocation>
        <location evidence="1">Host nucleus</location>
    </subcellularLocation>
    <subcellularLocation>
        <location evidence="10">Host lipid droplet</location>
    </subcellularLocation>
    <text evidence="4">Only a minor proportion of core protein is present in the nucleus (By similarity). Probably present on the surface of lipid droplets (By similarity).</text>
</comment>
<comment type="subcellular location">
    <molecule>Envelope glycoprotein E1</molecule>
    <subcellularLocation>
        <location evidence="14">Virion membrane</location>
        <topology evidence="14">Single-pass type I membrane protein</topology>
    </subcellularLocation>
    <subcellularLocation>
        <location>Host endoplasmic reticulum membrane</location>
        <topology evidence="4">Single-pass type I membrane protein</topology>
    </subcellularLocation>
    <text evidence="4">The C-terminal transmembrane domain acts as a signal sequence and forms a hairpin structure before cleavage by host signal peptidase (By similarity). After cleavage, the membrane sequence is retained at the C-terminus of the protein, serving as ER membrane anchor (By similarity). A reorientation of the second hydrophobic stretch occurs after cleavage producing a single reoriented transmembrane domain (By similarity). These events explain the final topology of the protein (By similarity).</text>
</comment>
<comment type="subcellular location">
    <molecule>Envelope glycoprotein E2</molecule>
    <subcellularLocation>
        <location evidence="14">Virion membrane</location>
        <topology evidence="14">Single-pass type I membrane protein</topology>
    </subcellularLocation>
    <subcellularLocation>
        <location>Host endoplasmic reticulum membrane</location>
        <topology evidence="4">Single-pass type I membrane protein</topology>
    </subcellularLocation>
    <subcellularLocation>
        <location evidence="11">Host lipid droplet</location>
    </subcellularLocation>
    <text evidence="4">The C-terminal transmembrane domain acts as a signal sequence and forms a hairpin structure before cleavage by host signal peptidase (By similarity). After cleavage, the membrane sequence is retained at the C-terminus of the protein, serving as ER membrane anchor (By similarity). A reorientation of the second hydrophobic stretch occurs after cleavage producing a single reoriented transmembrane domain (By similarity). These events explain the final topology of the protein (By similarity).</text>
</comment>
<comment type="domain">
    <molecule>Envelope glycoprotein E1</molecule>
    <text evidence="4">The transmembrane regions of envelope E1 and E2 glycoproteins are involved in heterodimer formation, ER localization, and assembly of these proteins.</text>
</comment>
<comment type="domain">
    <molecule>Envelope glycoprotein E2</molecule>
    <text evidence="2 4">The transmembrane regions of envelope E1 and E2 glycoproteins are involved in heterodimer formation, ER localization, and assembly of these proteins (By similarity). Envelope E2 glycoprotein contain two highly variable regions called hypervariable region 1 and 2 (HVR1 and HVR2) (By similarity). E2 also contain two segments involved in CD81-binding (By similarity). HVR1 is implicated in the SCARB1-mediated cell entry and probably acts as a regulator of the association of particles with lipids (By similarity).</text>
</comment>
<comment type="PTM">
    <molecule>Genome polyprotein</molecule>
    <text evidence="3 4">Specific enzymatic cleavages in vivo yield mature proteins (By similarity). The structural proteins, core, E1, E2 and p7 are produced by proteolytic processing by host signal peptidases (By similarity). The core protein precursor is synthesized as a 23 kDa, which is retained in the ER membrane through the hydrophobic signal peptide (By similarity). Cleavage by the signal peptidase releases the 21 kDa mature core protein (By similarity). The cleavage of the core protein precursor occurs between aminoacids 176 and 188 but the exact cleavage site is not known (By similarity). Some degraded forms of the core protein appear as well during the course of infection (By similarity). The other proteins (p7, NS2, NS3, NS4A, NS4B, NS5A and NS5B) are cleaved by the viral proteases (By similarity). Autoprocessing between NS2 and NS3 is mediated by the NS2 cysteine protease catalytic domain and regulated by the NS3 N-terminal domain (By similarity).</text>
</comment>
<comment type="PTM">
    <molecule>Mature core protein</molecule>
    <text evidence="6">Phosphorylated by host PKC and PKA.</text>
</comment>
<comment type="PTM">
    <molecule>Mature core protein</molecule>
    <text evidence="7">Ubiquitinated; mediated by UBE3A and leading to core protein subsequent proteasomal degradation.</text>
</comment>
<comment type="PTM">
    <molecule>Envelope glycoprotein E1</molecule>
    <text evidence="4">Highly N-glycosylated.</text>
</comment>
<comment type="PTM">
    <molecule>Envelope glycoprotein E2</molecule>
    <text evidence="4">Highly N-glycosylated.</text>
</comment>
<comment type="miscellaneous">
    <text evidence="14">Viral particle assembly takes place at the surface of ER-derived membranes in close proximity to lipid droplets. NS2 associates with E1/E2 glycoproteins, NS3 and NS5A, which interacts with the viral RNA and core protein to promote genome encapsidation. The nucleocapsid buds at the ER membrane where E1/E2 glycoproteins are anchored and afterward associate with nascent lipid droplet to acquire APOE and APOC. Secretion of viral particles is probably regulated by viroporin p7.</text>
</comment>
<comment type="miscellaneous">
    <molecule>Mature core protein</molecule>
    <text evidence="1">Exerts viral interference on hepatitis B virus when HCV and HBV coinfect the same cell, by suppressing HBV gene expression, RNA encapsidation and budding.</text>
</comment>
<comment type="similarity">
    <text evidence="14">Belongs to the hepacivirus polyprotein family.</text>
</comment>
<comment type="caution">
    <text evidence="14">The core gene probably also codes for alternative reading frame proteins (ARFPs). Many functions depicted for the core protein might belong to the ARFPs.</text>
</comment>
<proteinExistence type="inferred from homology"/>
<reference key="1">
    <citation type="journal article" date="1992" name="Virology">
        <title>Full-length sequence of a hepatitis C virus genome having poor homology to reported isolates: comparative study of four distinct genotypes.</title>
        <authorList>
            <person name="Okamoto H."/>
            <person name="Kurai K."/>
            <person name="Okada S."/>
            <person name="Yamamoto K."/>
            <person name="Lizuka H."/>
            <person name="Tanaka T."/>
            <person name="Fukuda S."/>
            <person name="Tsuda F."/>
            <person name="Mishiro S."/>
        </authorList>
    </citation>
    <scope>NUCLEOTIDE SEQUENCE [GENOMIC RNA]</scope>
</reference>
<reference key="2">
    <citation type="journal article" date="2000" name="J. Viral Hepat.">
        <title>Properties of the hepatitis C virus core protein: a structural protein that modulates cellular processes.</title>
        <authorList>
            <person name="McLauchlan J."/>
        </authorList>
    </citation>
    <scope>REVIEW</scope>
</reference>
<reference key="3">
    <citation type="journal article" date="2004" name="Hepatology">
        <title>Structural biology of hepatitis C virus.</title>
        <authorList>
            <person name="Penin F."/>
            <person name="Dubuisson J."/>
            <person name="Rey F.A."/>
            <person name="Moradpour D."/>
            <person name="Pawlotsky J.-M."/>
        </authorList>
    </citation>
    <scope>REVIEW</scope>
</reference>
<sequence>MSTNPKPQRKTKRNTNRRPQDVKFPGGGQIVGGVYLLPRRGPRLGVRATRKTSERSQPRGRRQPIPKARRPEGRAWAQPGYPWPLYGNEGLGWAGWLLSPRGSRPSWGPTDPRRRSRNLGKVIDTLTCGFADLMGYIPLVGAPLGGAARALAHGVRVLEDSVNYATGNLPGCSFSIFLLALLSCLTIPASAYEVRNVSGVYHVTNDCSNSSIVYEAADLIMHAPGCVPCVRENNSSRCWVALTPTLAARNTSIPTTTIRRHVDLLVGAATFCSAMYVGDLCGSVFLVSQLFTFSPRRHETLQDCNCSIYPGHLSGHRMAWDMMMNWSPTTALVVSQLLRIPQTVVDMVTGAHWGVLAGLAYYSMVGNWAKVLIVMLLFAGVDGTTHVTGGATGHTTSGIASLFLPGASQKIQLINTNGSWHINRTALNCNDSLNTGFLAALFYTHKFNASGCPERLASCRSIDGFDQGWGPITYTEPGDSDQKPYCWHYAPQRCSVVSAADVCGPVYCFTPSP</sequence>
<organismHost>
    <name type="scientific">Homo sapiens</name>
    <name type="common">Human</name>
    <dbReference type="NCBI Taxonomy" id="9606"/>
</organismHost>
<feature type="initiator methionine" description="Removed; by host" evidence="3">
    <location>
        <position position="1"/>
    </location>
</feature>
<feature type="chain" id="PRO_0000450911" description="Genome polyprotein">
    <location>
        <begin position="2"/>
        <end position="513" status="greater than"/>
    </location>
</feature>
<feature type="chain" id="PRO_0000037598" description="Core protein precursor">
    <location>
        <begin position="2"/>
        <end position="191"/>
    </location>
</feature>
<feature type="chain" id="PRO_0000037599" description="Mature core protein">
    <location>
        <begin position="2"/>
        <end position="177"/>
    </location>
</feature>
<feature type="propeptide" id="PRO_0000037600" description="ER anchor for the core protein, removed in mature form by host signal peptidase">
    <location>
        <begin position="178"/>
        <end position="191"/>
    </location>
</feature>
<feature type="chain" id="PRO_0000037601" description="Envelope glycoprotein E1">
    <location>
        <begin position="192"/>
        <end position="383"/>
    </location>
</feature>
<feature type="chain" id="PRO_0000037602" description="Envelope glycoprotein E2">
    <location>
        <begin position="384"/>
        <end position="513" status="greater than"/>
    </location>
</feature>
<feature type="topological domain" description="Cytoplasmic" evidence="12">
    <location>
        <begin position="2"/>
        <end position="168"/>
    </location>
</feature>
<feature type="transmembrane region" description="Helical" evidence="12">
    <location>
        <begin position="169"/>
        <end position="189"/>
    </location>
</feature>
<feature type="topological domain" description="Lumenal" evidence="4">
    <location>
        <begin position="190"/>
        <end position="358"/>
    </location>
</feature>
<feature type="transmembrane region" description="Helical" evidence="4">
    <location>
        <begin position="359"/>
        <end position="379"/>
    </location>
</feature>
<feature type="topological domain" description="Lumenal" evidence="4">
    <location>
        <begin position="380"/>
        <end position="513" status="greater than"/>
    </location>
</feature>
<feature type="region of interest" description="Disordered" evidence="4">
    <location>
        <begin position="2"/>
        <end position="75"/>
    </location>
</feature>
<feature type="region of interest" description="Interaction with DDX3X" evidence="8">
    <location>
        <begin position="2"/>
        <end position="59"/>
    </location>
</feature>
<feature type="region of interest" description="Interaction with EIF2AK2/PKR" evidence="1">
    <location>
        <begin position="2"/>
        <end position="58"/>
    </location>
</feature>
<feature type="region of interest" description="Interaction with STAT1" evidence="1">
    <location>
        <begin position="2"/>
        <end position="23"/>
    </location>
</feature>
<feature type="region of interest" description="Important for endoplasmic reticulum and mitochondrial localization" evidence="1">
    <location>
        <begin position="112"/>
        <end position="152"/>
    </location>
</feature>
<feature type="region of interest" description="Interaction with APOA2" evidence="5">
    <location>
        <begin position="122"/>
        <end position="173"/>
    </location>
</feature>
<feature type="region of interest" description="Important for lipid droplets localization" evidence="4">
    <location>
        <begin position="164"/>
        <end position="167"/>
    </location>
</feature>
<feature type="region of interest" description="Important for fusion" evidence="4">
    <location>
        <begin position="265"/>
        <end position="296"/>
    </location>
</feature>
<feature type="region of interest" description="HVR1" evidence="4">
    <location>
        <begin position="385"/>
        <end position="411"/>
    </location>
</feature>
<feature type="region of interest" description="HVR2" evidence="4">
    <location>
        <begin position="474"/>
        <end position="479"/>
    </location>
</feature>
<feature type="region of interest" description="CD81-binding 1" evidence="2">
    <location>
        <begin position="480"/>
        <end position="493"/>
    </location>
</feature>
<feature type="short sequence motif" description="Nuclear localization signal" evidence="10">
    <location>
        <begin position="5"/>
        <end position="13"/>
    </location>
</feature>
<feature type="short sequence motif" description="Nuclear localization signal" evidence="10">
    <location>
        <begin position="38"/>
        <end position="43"/>
    </location>
</feature>
<feature type="short sequence motif" description="Nuclear localization signal" evidence="10">
    <location>
        <begin position="58"/>
        <end position="64"/>
    </location>
</feature>
<feature type="short sequence motif" description="Nuclear localization signal" evidence="10">
    <location>
        <begin position="66"/>
        <end position="71"/>
    </location>
</feature>
<feature type="compositionally biased region" description="Basic residues" evidence="13">
    <location>
        <begin position="7"/>
        <end position="16"/>
    </location>
</feature>
<feature type="compositionally biased region" description="Low complexity" evidence="13">
    <location>
        <begin position="32"/>
        <end position="47"/>
    </location>
</feature>
<feature type="compositionally biased region" description="Basic residues" evidence="13">
    <location>
        <begin position="58"/>
        <end position="68"/>
    </location>
</feature>
<feature type="site" description="Cleavage; by host signal peptide peptidase" evidence="1">
    <location>
        <begin position="177"/>
        <end position="178"/>
    </location>
</feature>
<feature type="site" description="Cleavage; by host signal peptidase" evidence="1">
    <location>
        <begin position="191"/>
        <end position="192"/>
    </location>
</feature>
<feature type="site" description="Cleavage; by host signal peptidase" evidence="1">
    <location>
        <begin position="383"/>
        <end position="384"/>
    </location>
</feature>
<feature type="modified residue" description="N-acetylserine; by host" evidence="9">
    <location>
        <position position="2"/>
    </location>
</feature>
<feature type="modified residue" description="Phosphoserine; by host" evidence="6">
    <location>
        <position position="53"/>
    </location>
</feature>
<feature type="modified residue" description="Phosphoserine; by host" evidence="6">
    <location>
        <position position="99"/>
    </location>
</feature>
<feature type="modified residue" description="Phosphoserine; by host PKA" evidence="6">
    <location>
        <position position="116"/>
    </location>
</feature>
<feature type="glycosylation site" description="N-linked (GlcNAc...) asparagine; by host" evidence="4">
    <location>
        <position position="196"/>
    </location>
</feature>
<feature type="glycosylation site" description="N-linked (GlcNAc...) asparagine; by host" evidence="4">
    <location>
        <position position="209"/>
    </location>
</feature>
<feature type="glycosylation site" description="N-linked (GlcNAc...) asparagine; by host" evidence="4">
    <location>
        <position position="234"/>
    </location>
</feature>
<feature type="glycosylation site" description="N-linked (GlcNAc...) asparagine; by host" evidence="4">
    <location>
        <position position="250"/>
    </location>
</feature>
<feature type="glycosylation site" description="N-linked (GlcNAc...) asparagine; by host" evidence="12">
    <location>
        <position position="305"/>
    </location>
</feature>
<feature type="glycosylation site" description="N-linked (GlcNAc...) (high mannose) asparagine; by host" evidence="4">
    <location>
        <position position="417"/>
    </location>
</feature>
<feature type="glycosylation site" description="N-linked (GlcNAc...) (high mannose) asparagine; by host" evidence="4">
    <location>
        <position position="423"/>
    </location>
</feature>
<feature type="glycosylation site" description="N-linked (GlcNAc...) (high mannose) asparagine; by host" evidence="4">
    <location>
        <position position="430"/>
    </location>
</feature>
<feature type="glycosylation site" description="N-linked (GlcNAc...) (high mannose) asparagine; by host" evidence="4">
    <location>
        <position position="448"/>
    </location>
</feature>
<feature type="non-terminal residue">
    <location>
        <position position="513"/>
    </location>
</feature>
<protein>
    <recommendedName>
        <fullName>Genome polyprotein</fullName>
    </recommendedName>
    <component>
        <recommendedName>
            <fullName>Core protein precursor</fullName>
        </recommendedName>
        <alternativeName>
            <fullName>Capsid protein C</fullName>
        </alternativeName>
        <alternativeName>
            <fullName>p23</fullName>
        </alternativeName>
    </component>
    <component>
        <recommendedName>
            <fullName>Mature core protein</fullName>
        </recommendedName>
        <alternativeName>
            <fullName>p21</fullName>
        </alternativeName>
    </component>
    <component>
        <recommendedName>
            <fullName>Envelope glycoprotein E1</fullName>
        </recommendedName>
        <alternativeName>
            <fullName>gp32</fullName>
        </alternativeName>
        <alternativeName>
            <fullName>gp35</fullName>
        </alternativeName>
    </component>
    <component>
        <recommendedName>
            <fullName>Envelope glycoprotein E2</fullName>
        </recommendedName>
        <alternativeName>
            <fullName>NS1</fullName>
        </alternativeName>
        <alternativeName>
            <fullName>gp68</fullName>
        </alternativeName>
        <alternativeName>
            <fullName>gp70</fullName>
        </alternativeName>
    </component>
</protein>
<organism>
    <name type="scientific">Hepatitis C virus (isolate HC-J2)</name>
    <name type="common">HCV</name>
    <dbReference type="NCBI Taxonomy" id="11111"/>
    <lineage>
        <taxon>Viruses</taxon>
        <taxon>Riboviria</taxon>
        <taxon>Orthornavirae</taxon>
        <taxon>Kitrinoviricota</taxon>
        <taxon>Flasuviricetes</taxon>
        <taxon>Amarillovirales</taxon>
        <taxon>Flaviviridae</taxon>
        <taxon>Hepacivirus</taxon>
        <taxon>Hepacivirus hominis</taxon>
    </lineage>
</organism>